<keyword id="KW-0002">3D-structure</keyword>
<keyword id="KW-0963">Cytoplasm</keyword>
<keyword id="KW-0418">Kinase</keyword>
<keyword id="KW-0597">Phosphoprotein</keyword>
<keyword id="KW-1185">Reference proteome</keyword>
<keyword id="KW-0808">Transferase</keyword>
<accession>Q2YQA5</accession>
<comment type="function">
    <text evidence="1">Component of a regulatory phosphorelay system that controls B.abortus cell growth, division, and intracellular survival inside mammalian host cells. This signaling pathway is composed of CckA, ChpT, CtrA and CpdR. ChpT efficiently and specifically shuttles phosphoryl groups from the CckA kinase to the receiver domains of both CtrA and CpdR. Does not bind ATP. Overexpression of chpT results in a defect in cell morphology, DNA content, and intracellular survival in human macrophages.</text>
</comment>
<comment type="subunit">
    <text evidence="1">Homodimer. Forms an asymmetric heterotetramer with CtrA (2:2). There are at least two modes of interaction between ChpT and CtrA, only one of which is competent to catalyze His-Asp phosphoryl transfer.</text>
</comment>
<comment type="subcellular location">
    <subcellularLocation>
        <location evidence="4">Cytoplasm</location>
    </subcellularLocation>
</comment>
<comment type="domain">
    <text evidence="1">Each ChpT monomer is composed of an N-terminal dimerization and histidine phosphotransfer (DHp) domain and a C-terminal domain that is structurally similar to the catalytic and ATP-binding domain found in histidine kinases but that lacks regions required for ATP binding.</text>
</comment>
<comment type="PTM">
    <text evidence="1">Is phosphorylated by CckA-P on His-22.</text>
</comment>
<comment type="disruption phenotype">
    <text evidence="1">This gene cannot be deleted or disrupted in the absence of a complementary copy expressed in trans, indicating this gene is essential in B.abortus.</text>
</comment>
<comment type="similarity">
    <text evidence="3">Belongs to the ChpT phosphotransferase family.</text>
</comment>
<dbReference type="EC" id="2.7.99.-" evidence="4"/>
<dbReference type="EMBL" id="AM040264">
    <property type="protein sequence ID" value="CAJ11569.1"/>
    <property type="molecule type" value="Genomic_DNA"/>
</dbReference>
<dbReference type="RefSeq" id="WP_002964698.1">
    <property type="nucleotide sequence ID" value="NZ_KN046823.1"/>
</dbReference>
<dbReference type="PDB" id="4QPJ">
    <property type="method" value="X-ray"/>
    <property type="resolution" value="2.74 A"/>
    <property type="chains" value="A/B=1-209"/>
</dbReference>
<dbReference type="PDB" id="4QPK">
    <property type="method" value="X-ray"/>
    <property type="resolution" value="1.66 A"/>
    <property type="chains" value="A/B=1-209"/>
</dbReference>
<dbReference type="PDBsum" id="4QPJ"/>
<dbReference type="PDBsum" id="4QPK"/>
<dbReference type="SMR" id="Q2YQA5"/>
<dbReference type="STRING" id="359391.BAB1_1613"/>
<dbReference type="iPTMnet" id="Q2YQA5"/>
<dbReference type="KEGG" id="bmf:BAB1_1613"/>
<dbReference type="PATRIC" id="fig|359391.11.peg.1063"/>
<dbReference type="HOGENOM" id="CLU_086320_0_0_5"/>
<dbReference type="PhylomeDB" id="Q2YQA5"/>
<dbReference type="EvolutionaryTrace" id="Q2YQA5"/>
<dbReference type="Proteomes" id="UP000002719">
    <property type="component" value="Chromosome I"/>
</dbReference>
<dbReference type="GO" id="GO:0005737">
    <property type="term" value="C:cytoplasm"/>
    <property type="evidence" value="ECO:0007669"/>
    <property type="project" value="UniProtKB-SubCell"/>
</dbReference>
<dbReference type="GO" id="GO:0042803">
    <property type="term" value="F:protein homodimerization activity"/>
    <property type="evidence" value="ECO:0000314"/>
    <property type="project" value="UniProtKB"/>
</dbReference>
<dbReference type="GO" id="GO:0004672">
    <property type="term" value="F:protein kinase activity"/>
    <property type="evidence" value="ECO:0000314"/>
    <property type="project" value="UniProtKB"/>
</dbReference>
<dbReference type="GO" id="GO:0018197">
    <property type="term" value="P:peptidyl-aspartic acid modification"/>
    <property type="evidence" value="ECO:0000314"/>
    <property type="project" value="UniProtKB"/>
</dbReference>
<dbReference type="GO" id="GO:0000160">
    <property type="term" value="P:phosphorelay signal transduction system"/>
    <property type="evidence" value="ECO:0000314"/>
    <property type="project" value="UniProtKB"/>
</dbReference>
<dbReference type="FunFam" id="1.10.287.130:FF:000058">
    <property type="entry name" value="Histidine phosphotransferase ChpT"/>
    <property type="match status" value="1"/>
</dbReference>
<dbReference type="Gene3D" id="1.10.287.130">
    <property type="match status" value="1"/>
</dbReference>
<dbReference type="Gene3D" id="3.30.565.10">
    <property type="entry name" value="Histidine kinase-like ATPase, C-terminal domain"/>
    <property type="match status" value="1"/>
</dbReference>
<dbReference type="InterPro" id="IPR018762">
    <property type="entry name" value="ChpT_C"/>
</dbReference>
<dbReference type="InterPro" id="IPR036890">
    <property type="entry name" value="HATPase_C_sf"/>
</dbReference>
<dbReference type="NCBIfam" id="NF046018">
    <property type="entry name" value="HisPtaseChptBrucRhz"/>
    <property type="match status" value="1"/>
</dbReference>
<dbReference type="Pfam" id="PF10090">
    <property type="entry name" value="HPTransfase"/>
    <property type="match status" value="1"/>
</dbReference>
<protein>
    <recommendedName>
        <fullName evidence="4">Protein phosphotransferase ChpT</fullName>
        <ecNumber evidence="4">2.7.99.-</ecNumber>
    </recommendedName>
    <alternativeName>
        <fullName evidence="2">Histidine phosphotransferase</fullName>
    </alternativeName>
</protein>
<sequence length="209" mass="22279">MSLPVTLSALDLGALLCSRICHDIISPVGAINNGLELLEEGGADEDAMALIKSSARNASARLQFARIAFGAAGSAGVQIDTGDAQNVATEYFRNEKPEFTWEGARVLLPKNKVKLLLNMLLIGNGAIPRGGSLAVRLEGSDTDPRFVITVKGRMLRVPPKFLELHSGAAPEEPIDAHSVQPYYTLLLAEEAGMKISIHATAEDIVFSAE</sequence>
<proteinExistence type="evidence at protein level"/>
<evidence type="ECO:0000269" key="1">
    <source>
    </source>
</evidence>
<evidence type="ECO:0000303" key="2">
    <source>
    </source>
</evidence>
<evidence type="ECO:0000305" key="3"/>
<evidence type="ECO:0000305" key="4">
    <source>
    </source>
</evidence>
<evidence type="ECO:0000312" key="5">
    <source>
        <dbReference type="EMBL" id="CAJ11569.1"/>
    </source>
</evidence>
<evidence type="ECO:0007829" key="6">
    <source>
        <dbReference type="PDB" id="4QPK"/>
    </source>
</evidence>
<reference key="1">
    <citation type="journal article" date="2005" name="Infect. Immun.">
        <title>Whole-genome analyses of speciation events in pathogenic Brucellae.</title>
        <authorList>
            <person name="Chain P.S."/>
            <person name="Comerci D.J."/>
            <person name="Tolmasky M.E."/>
            <person name="Larimer F.W."/>
            <person name="Malfatti S.A."/>
            <person name="Vergez L.M."/>
            <person name="Aguero F."/>
            <person name="Land M.L."/>
            <person name="Ugalde R.A."/>
            <person name="Garcia E."/>
        </authorList>
    </citation>
    <scope>NUCLEOTIDE SEQUENCE [LARGE SCALE GENOMIC DNA]</scope>
    <source>
        <strain>2308</strain>
    </source>
</reference>
<reference key="2">
    <citation type="journal article" date="2015" name="Proc. Natl. Acad. Sci. U.S.A.">
        <title>Structural asymmetry in a conserved signaling system that regulates division, replication, and virulence of an intracellular pathogen.</title>
        <authorList>
            <person name="Willett J.W."/>
            <person name="Herrou J."/>
            <person name="Briegel A."/>
            <person name="Rotskoff G."/>
            <person name="Crosson S."/>
        </authorList>
    </citation>
    <scope>X-RAY CRYSTALLOGRAPHY (1.66 ANGSTROMS) OF APOENZYME AND IN COMPLEX WITH THE RECEIVER DOMAIN OF CTRA</scope>
    <scope>FUNCTION</scope>
    <scope>SUBCELLULAR LOCATION</scope>
    <scope>SUBUNIT</scope>
    <scope>PHOSPHORYLATION AT HIS-22</scope>
    <scope>INTERACTION WITH CTRA</scope>
    <scope>DISRUPTION PHENOTYPE</scope>
    <scope>DOMAIN</scope>
    <scope>MUTAGENESIS OF HIS-22; ASN-33; GLU-36 AND GLU-40</scope>
    <source>
        <strain>2308</strain>
    </source>
</reference>
<organism>
    <name type="scientific">Brucella abortus (strain 2308)</name>
    <dbReference type="NCBI Taxonomy" id="359391"/>
    <lineage>
        <taxon>Bacteria</taxon>
        <taxon>Pseudomonadati</taxon>
        <taxon>Pseudomonadota</taxon>
        <taxon>Alphaproteobacteria</taxon>
        <taxon>Hyphomicrobiales</taxon>
        <taxon>Brucellaceae</taxon>
        <taxon>Brucella/Ochrobactrum group</taxon>
        <taxon>Brucella</taxon>
    </lineage>
</organism>
<name>CHPT_BRUA2</name>
<feature type="chain" id="PRO_0000436619" description="Protein phosphotransferase ChpT">
    <location>
        <begin position="1"/>
        <end position="209"/>
    </location>
</feature>
<feature type="modified residue" description="Phosphohistidine" evidence="1">
    <location>
        <position position="22"/>
    </location>
</feature>
<feature type="mutagenesis site" description="Loss of phosphoryl transfer from CckA-P to ChpT." evidence="1">
    <original>H</original>
    <variation>A</variation>
    <location>
        <position position="22"/>
    </location>
</feature>
<feature type="mutagenesis site" description="5-fold decrease in phosphoryl transfer from CckA-P to ChpT." evidence="1">
    <original>N</original>
    <variation>R</variation>
    <location>
        <position position="33"/>
    </location>
</feature>
<feature type="mutagenesis site" description="10-fold decrease in phosphoryl transfer from CckA-P to ChpT." evidence="1">
    <original>E</original>
    <variation>R</variation>
    <location>
        <position position="36"/>
    </location>
</feature>
<feature type="mutagenesis site" description="3-fold decrease in phosphoryl transfer from CckA-P to ChpT." evidence="1">
    <original>E</original>
    <variation>R</variation>
    <location>
        <position position="40"/>
    </location>
</feature>
<feature type="helix" evidence="6">
    <location>
        <begin position="9"/>
        <end position="40"/>
    </location>
</feature>
<feature type="helix" evidence="6">
    <location>
        <begin position="44"/>
        <end position="68"/>
    </location>
</feature>
<feature type="strand" evidence="6">
    <location>
        <begin position="78"/>
        <end position="80"/>
    </location>
</feature>
<feature type="helix" evidence="6">
    <location>
        <begin position="81"/>
        <end position="93"/>
    </location>
</feature>
<feature type="strand" evidence="6">
    <location>
        <begin position="95"/>
        <end position="103"/>
    </location>
</feature>
<feature type="strand" evidence="6">
    <location>
        <begin position="107"/>
        <end position="109"/>
    </location>
</feature>
<feature type="helix" evidence="6">
    <location>
        <begin position="110"/>
        <end position="126"/>
    </location>
</feature>
<feature type="strand" evidence="6">
    <location>
        <begin position="132"/>
        <end position="139"/>
    </location>
</feature>
<feature type="strand" evidence="6">
    <location>
        <begin position="141"/>
        <end position="151"/>
    </location>
</feature>
<feature type="helix" evidence="6">
    <location>
        <begin position="159"/>
        <end position="165"/>
    </location>
</feature>
<feature type="turn" evidence="6">
    <location>
        <begin position="176"/>
        <end position="178"/>
    </location>
</feature>
<feature type="helix" evidence="6">
    <location>
        <begin position="179"/>
        <end position="191"/>
    </location>
</feature>
<feature type="strand" evidence="6">
    <location>
        <begin position="196"/>
        <end position="199"/>
    </location>
</feature>
<feature type="strand" evidence="6">
    <location>
        <begin position="204"/>
        <end position="208"/>
    </location>
</feature>
<gene>
    <name evidence="2" type="primary">chpT</name>
    <name evidence="5" type="ordered locus">BAB1_1613</name>
</gene>